<comment type="function">
    <text evidence="1">Receptor that may play a role in the perception of bitterness and is gustducin-linked. May play a role in sensing the chemical composition of the gastrointestinal content. The activity of this receptor may stimulate alpha gustducin, mediate PLC-beta-2 activation and lead to the gating of TRPM5 (By similarity). In airway epithelial cells, binding of bitter compounds increases the intracellular calcium ion concentration and stimulates ciliary beat frequency (By similarity).</text>
</comment>
<comment type="subcellular location">
    <subcellularLocation>
        <location>Membrane</location>
        <topology>Multi-pass membrane protein</topology>
    </subcellularLocation>
    <subcellularLocation>
        <location>Cell projection</location>
        <location>Cilium membrane</location>
    </subcellularLocation>
    <text evidence="1">In airway epithelial cells, localizes to motile cilia.</text>
</comment>
<comment type="miscellaneous">
    <text>Most taste cells may be activated by a limited number of bitter compounds; individual taste cells can discriminate among bitter stimuli.</text>
</comment>
<comment type="similarity">
    <text evidence="3">Belongs to the G-protein coupled receptor T2R family.</text>
</comment>
<feature type="chain" id="PRO_0000082322" description="Taste receptor type 2 member 46">
    <location>
        <begin position="1"/>
        <end position="309"/>
    </location>
</feature>
<feature type="topological domain" description="Extracellular" evidence="2">
    <location>
        <position position="1"/>
    </location>
</feature>
<feature type="transmembrane region" description="Helical; Name=1" evidence="2">
    <location>
        <begin position="2"/>
        <end position="22"/>
    </location>
</feature>
<feature type="topological domain" description="Cytoplasmic" evidence="2">
    <location>
        <begin position="23"/>
        <end position="46"/>
    </location>
</feature>
<feature type="transmembrane region" description="Helical; Name=2" evidence="2">
    <location>
        <begin position="47"/>
        <end position="67"/>
    </location>
</feature>
<feature type="topological domain" description="Extracellular" evidence="2">
    <location>
        <begin position="68"/>
        <end position="86"/>
    </location>
</feature>
<feature type="transmembrane region" description="Helical; Name=3" evidence="2">
    <location>
        <begin position="87"/>
        <end position="107"/>
    </location>
</feature>
<feature type="topological domain" description="Cytoplasmic" evidence="2">
    <location>
        <begin position="108"/>
        <end position="126"/>
    </location>
</feature>
<feature type="transmembrane region" description="Helical; Name=4" evidence="2">
    <location>
        <begin position="127"/>
        <end position="147"/>
    </location>
</feature>
<feature type="topological domain" description="Extracellular" evidence="2">
    <location>
        <begin position="148"/>
        <end position="178"/>
    </location>
</feature>
<feature type="transmembrane region" description="Helical; Name=5" evidence="2">
    <location>
        <begin position="179"/>
        <end position="199"/>
    </location>
</feature>
<feature type="topological domain" description="Cytoplasmic" evidence="2">
    <location>
        <begin position="200"/>
        <end position="229"/>
    </location>
</feature>
<feature type="transmembrane region" description="Helical; Name=6" evidence="2">
    <location>
        <begin position="230"/>
        <end position="250"/>
    </location>
</feature>
<feature type="topological domain" description="Extracellular" evidence="2">
    <location>
        <begin position="251"/>
        <end position="259"/>
    </location>
</feature>
<feature type="transmembrane region" description="Helical; Name=7" evidence="2">
    <location>
        <begin position="260"/>
        <end position="280"/>
    </location>
</feature>
<feature type="topological domain" description="Cytoplasmic" evidence="2">
    <location>
        <begin position="281"/>
        <end position="309"/>
    </location>
</feature>
<feature type="glycosylation site" description="N-linked (GlcNAc...) asparagine" evidence="2">
    <location>
        <position position="161"/>
    </location>
</feature>
<feature type="glycosylation site" description="N-linked (GlcNAc...) asparagine" evidence="2">
    <location>
        <position position="176"/>
    </location>
</feature>
<protein>
    <recommendedName>
        <fullName>Taste receptor type 2 member 46</fullName>
        <shortName>T2R46</shortName>
    </recommendedName>
</protein>
<proteinExistence type="inferred from homology"/>
<gene>
    <name type="primary">TAS2R46</name>
</gene>
<sequence>MITFLPITFSILIVVIFFIGNFANGFIALINSIEWVKRQKISFAGQILTALAVSRVGLLWVLSLHWYATEFNLAFHSVEVRSTAYNVWVVTNHFSNWLSTSLSMFYLLRIATFSNLIFLHLNRRVKSVILVTLLGPLLFLVCQLFVMNMNQIVRTKEYEGNMTWKIKLKSAMYLSNTTVAMLANFVPLTLTLISFLLLICSLCKHLKKMRVHGKGSQDPSTKVHTKALQIVTSFLLVCAIYFLSIILSVWNSGGLENKPFFMFCQAIKFSYPSTHPFILIWGNKTLKQTFLSVLRNVRYWVKGQKPSSP</sequence>
<organism>
    <name type="scientific">Papio hamadryas</name>
    <name type="common">Hamadryas baboon</name>
    <dbReference type="NCBI Taxonomy" id="9557"/>
    <lineage>
        <taxon>Eukaryota</taxon>
        <taxon>Metazoa</taxon>
        <taxon>Chordata</taxon>
        <taxon>Craniata</taxon>
        <taxon>Vertebrata</taxon>
        <taxon>Euteleostomi</taxon>
        <taxon>Mammalia</taxon>
        <taxon>Eutheria</taxon>
        <taxon>Euarchontoglires</taxon>
        <taxon>Primates</taxon>
        <taxon>Haplorrhini</taxon>
        <taxon>Catarrhini</taxon>
        <taxon>Cercopithecidae</taxon>
        <taxon>Cercopithecinae</taxon>
        <taxon>Papio</taxon>
    </lineage>
</organism>
<reference key="1">
    <citation type="journal article" date="2005" name="Mol. Biol. Evol.">
        <title>Evolution of bitter taste receptors in humans and apes.</title>
        <authorList>
            <person name="Fischer A."/>
            <person name="Gilad Y."/>
            <person name="Man O."/>
            <person name="Paeaebo S."/>
        </authorList>
    </citation>
    <scope>NUCLEOTIDE SEQUENCE [GENOMIC DNA]</scope>
</reference>
<accession>Q646G0</accession>
<dbReference type="EMBL" id="AY724822">
    <property type="protein sequence ID" value="AAU21059.1"/>
    <property type="molecule type" value="Genomic_DNA"/>
</dbReference>
<dbReference type="SMR" id="Q646G0"/>
<dbReference type="GlyCosmos" id="Q646G0">
    <property type="glycosylation" value="2 sites, No reported glycans"/>
</dbReference>
<dbReference type="GO" id="GO:0060170">
    <property type="term" value="C:ciliary membrane"/>
    <property type="evidence" value="ECO:0007669"/>
    <property type="project" value="UniProtKB-SubCell"/>
</dbReference>
<dbReference type="GO" id="GO:0033038">
    <property type="term" value="F:bitter taste receptor activity"/>
    <property type="evidence" value="ECO:0007669"/>
    <property type="project" value="InterPro"/>
</dbReference>
<dbReference type="GO" id="GO:0004930">
    <property type="term" value="F:G protein-coupled receptor activity"/>
    <property type="evidence" value="ECO:0007669"/>
    <property type="project" value="UniProtKB-KW"/>
</dbReference>
<dbReference type="CDD" id="cd15027">
    <property type="entry name" value="7tm_TAS2R43-like"/>
    <property type="match status" value="1"/>
</dbReference>
<dbReference type="FunFam" id="1.20.1070.10:FF:000042">
    <property type="entry name" value="Taste receptor type 2 member 7"/>
    <property type="match status" value="1"/>
</dbReference>
<dbReference type="Gene3D" id="1.20.1070.10">
    <property type="entry name" value="Rhodopsin 7-helix transmembrane proteins"/>
    <property type="match status" value="1"/>
</dbReference>
<dbReference type="InterPro" id="IPR007960">
    <property type="entry name" value="TAS2R"/>
</dbReference>
<dbReference type="PANTHER" id="PTHR11394">
    <property type="entry name" value="TASTE RECEPTOR TYPE 2"/>
    <property type="match status" value="1"/>
</dbReference>
<dbReference type="PANTHER" id="PTHR11394:SF48">
    <property type="entry name" value="TASTE RECEPTOR TYPE 2 MEMBER 30"/>
    <property type="match status" value="1"/>
</dbReference>
<dbReference type="Pfam" id="PF05296">
    <property type="entry name" value="TAS2R"/>
    <property type="match status" value="1"/>
</dbReference>
<dbReference type="SUPFAM" id="SSF81321">
    <property type="entry name" value="Family A G protein-coupled receptor-like"/>
    <property type="match status" value="1"/>
</dbReference>
<keyword id="KW-1003">Cell membrane</keyword>
<keyword id="KW-0966">Cell projection</keyword>
<keyword id="KW-0969">Cilium</keyword>
<keyword id="KW-0297">G-protein coupled receptor</keyword>
<keyword id="KW-0325">Glycoprotein</keyword>
<keyword id="KW-0472">Membrane</keyword>
<keyword id="KW-0675">Receptor</keyword>
<keyword id="KW-0716">Sensory transduction</keyword>
<keyword id="KW-0919">Taste</keyword>
<keyword id="KW-0807">Transducer</keyword>
<keyword id="KW-0812">Transmembrane</keyword>
<keyword id="KW-1133">Transmembrane helix</keyword>
<evidence type="ECO:0000250" key="1"/>
<evidence type="ECO:0000255" key="2"/>
<evidence type="ECO:0000305" key="3"/>
<name>T2R46_PAPHA</name>